<proteinExistence type="inferred from homology"/>
<accession>Q8ZN19</accession>
<organism>
    <name type="scientific">Salmonella typhimurium (strain LT2 / SGSC1412 / ATCC 700720)</name>
    <dbReference type="NCBI Taxonomy" id="99287"/>
    <lineage>
        <taxon>Bacteria</taxon>
        <taxon>Pseudomonadati</taxon>
        <taxon>Pseudomonadota</taxon>
        <taxon>Gammaproteobacteria</taxon>
        <taxon>Enterobacterales</taxon>
        <taxon>Enterobacteriaceae</taxon>
        <taxon>Salmonella</taxon>
    </lineage>
</organism>
<comment type="function">
    <text evidence="2">Catalyzes the complicated ring closure reaction between the two acyclic compounds 1-deoxy-D-xylulose-5-phosphate (DXP) and 3-amino-2-oxopropyl phosphate (1-amino-acetone-3-phosphate or AAP) to form pyridoxine 5'-phosphate (PNP) and inorganic phosphate.</text>
</comment>
<comment type="catalytic activity">
    <reaction evidence="2">
        <text>3-amino-2-oxopropyl phosphate + 1-deoxy-D-xylulose 5-phosphate = pyridoxine 5'-phosphate + phosphate + 2 H2O + H(+)</text>
        <dbReference type="Rhea" id="RHEA:15265"/>
        <dbReference type="ChEBI" id="CHEBI:15377"/>
        <dbReference type="ChEBI" id="CHEBI:15378"/>
        <dbReference type="ChEBI" id="CHEBI:43474"/>
        <dbReference type="ChEBI" id="CHEBI:57279"/>
        <dbReference type="ChEBI" id="CHEBI:57792"/>
        <dbReference type="ChEBI" id="CHEBI:58589"/>
        <dbReference type="EC" id="2.6.99.2"/>
    </reaction>
</comment>
<comment type="pathway">
    <text evidence="2">Cofactor biosynthesis; pyridoxine 5'-phosphate biosynthesis; pyridoxine 5'-phosphate from D-erythrose 4-phosphate: step 5/5.</text>
</comment>
<comment type="subunit">
    <text evidence="2">Homooctamer; tetramer of dimers.</text>
</comment>
<comment type="subcellular location">
    <subcellularLocation>
        <location evidence="2">Cytoplasm</location>
    </subcellularLocation>
</comment>
<comment type="similarity">
    <text evidence="2">Belongs to the PNP synthase family.</text>
</comment>
<keyword id="KW-0963">Cytoplasm</keyword>
<keyword id="KW-0664">Pyridoxine biosynthesis</keyword>
<keyword id="KW-1185">Reference proteome</keyword>
<keyword id="KW-0808">Transferase</keyword>
<feature type="initiator methionine" description="Removed" evidence="1">
    <location>
        <position position="1"/>
    </location>
</feature>
<feature type="chain" id="PRO_0000190130" description="Pyridoxine 5'-phosphate synthase">
    <location>
        <begin position="2"/>
        <end position="243"/>
    </location>
</feature>
<feature type="active site" description="Proton acceptor" evidence="2">
    <location>
        <position position="45"/>
    </location>
</feature>
<feature type="active site" description="Proton acceptor" evidence="2">
    <location>
        <position position="72"/>
    </location>
</feature>
<feature type="active site" description="Proton donor" evidence="2">
    <location>
        <position position="193"/>
    </location>
</feature>
<feature type="binding site" evidence="2">
    <location>
        <position position="9"/>
    </location>
    <ligand>
        <name>3-amino-2-oxopropyl phosphate</name>
        <dbReference type="ChEBI" id="CHEBI:57279"/>
    </ligand>
</feature>
<feature type="binding site" evidence="2">
    <location>
        <begin position="11"/>
        <end position="12"/>
    </location>
    <ligand>
        <name>1-deoxy-D-xylulose 5-phosphate</name>
        <dbReference type="ChEBI" id="CHEBI:57792"/>
    </ligand>
</feature>
<feature type="binding site" evidence="2">
    <location>
        <position position="20"/>
    </location>
    <ligand>
        <name>3-amino-2-oxopropyl phosphate</name>
        <dbReference type="ChEBI" id="CHEBI:57279"/>
    </ligand>
</feature>
<feature type="binding site" evidence="2">
    <location>
        <position position="47"/>
    </location>
    <ligand>
        <name>1-deoxy-D-xylulose 5-phosphate</name>
        <dbReference type="ChEBI" id="CHEBI:57792"/>
    </ligand>
</feature>
<feature type="binding site" evidence="2">
    <location>
        <position position="52"/>
    </location>
    <ligand>
        <name>1-deoxy-D-xylulose 5-phosphate</name>
        <dbReference type="ChEBI" id="CHEBI:57792"/>
    </ligand>
</feature>
<feature type="binding site" evidence="2">
    <location>
        <position position="102"/>
    </location>
    <ligand>
        <name>1-deoxy-D-xylulose 5-phosphate</name>
        <dbReference type="ChEBI" id="CHEBI:57792"/>
    </ligand>
</feature>
<feature type="binding site" evidence="2">
    <location>
        <position position="194"/>
    </location>
    <ligand>
        <name>3-amino-2-oxopropyl phosphate</name>
        <dbReference type="ChEBI" id="CHEBI:57279"/>
    </ligand>
</feature>
<feature type="binding site" evidence="2">
    <location>
        <begin position="215"/>
        <end position="216"/>
    </location>
    <ligand>
        <name>3-amino-2-oxopropyl phosphate</name>
        <dbReference type="ChEBI" id="CHEBI:57279"/>
    </ligand>
</feature>
<feature type="site" description="Transition state stabilizer" evidence="2">
    <location>
        <position position="153"/>
    </location>
</feature>
<dbReference type="EC" id="2.6.99.2" evidence="2"/>
<dbReference type="EMBL" id="AE006468">
    <property type="protein sequence ID" value="AAL21472.1"/>
    <property type="molecule type" value="Genomic_DNA"/>
</dbReference>
<dbReference type="RefSeq" id="NP_461513.1">
    <property type="nucleotide sequence ID" value="NC_003197.2"/>
</dbReference>
<dbReference type="RefSeq" id="WP_000818972.1">
    <property type="nucleotide sequence ID" value="NC_003197.2"/>
</dbReference>
<dbReference type="SMR" id="Q8ZN19"/>
<dbReference type="STRING" id="99287.STM2578"/>
<dbReference type="PaxDb" id="99287-STM2578"/>
<dbReference type="GeneID" id="1254100"/>
<dbReference type="KEGG" id="stm:STM2578"/>
<dbReference type="PATRIC" id="fig|99287.12.peg.2719"/>
<dbReference type="HOGENOM" id="CLU_074563_0_0_6"/>
<dbReference type="OMA" id="ERHIRYQ"/>
<dbReference type="PhylomeDB" id="Q8ZN19"/>
<dbReference type="BioCyc" id="SENT99287:STM2578-MONOMER"/>
<dbReference type="UniPathway" id="UPA00244">
    <property type="reaction ID" value="UER00313"/>
</dbReference>
<dbReference type="Proteomes" id="UP000001014">
    <property type="component" value="Chromosome"/>
</dbReference>
<dbReference type="GO" id="GO:0005829">
    <property type="term" value="C:cytosol"/>
    <property type="evidence" value="ECO:0000318"/>
    <property type="project" value="GO_Central"/>
</dbReference>
<dbReference type="GO" id="GO:0033856">
    <property type="term" value="F:pyridoxine 5'-phosphate synthase activity"/>
    <property type="evidence" value="ECO:0000318"/>
    <property type="project" value="GO_Central"/>
</dbReference>
<dbReference type="GO" id="GO:0008615">
    <property type="term" value="P:pyridoxine biosynthetic process"/>
    <property type="evidence" value="ECO:0000318"/>
    <property type="project" value="GO_Central"/>
</dbReference>
<dbReference type="CDD" id="cd00003">
    <property type="entry name" value="PNPsynthase"/>
    <property type="match status" value="1"/>
</dbReference>
<dbReference type="FunFam" id="3.20.20.70:FF:000042">
    <property type="entry name" value="Pyridoxine 5'-phosphate synthase"/>
    <property type="match status" value="1"/>
</dbReference>
<dbReference type="Gene3D" id="3.20.20.70">
    <property type="entry name" value="Aldolase class I"/>
    <property type="match status" value="1"/>
</dbReference>
<dbReference type="HAMAP" id="MF_00279">
    <property type="entry name" value="PdxJ"/>
    <property type="match status" value="1"/>
</dbReference>
<dbReference type="InterPro" id="IPR013785">
    <property type="entry name" value="Aldolase_TIM"/>
</dbReference>
<dbReference type="InterPro" id="IPR004569">
    <property type="entry name" value="PyrdxlP_synth_PdxJ"/>
</dbReference>
<dbReference type="InterPro" id="IPR036130">
    <property type="entry name" value="Pyridoxine-5'_phos_synth"/>
</dbReference>
<dbReference type="NCBIfam" id="TIGR00559">
    <property type="entry name" value="pdxJ"/>
    <property type="match status" value="1"/>
</dbReference>
<dbReference type="NCBIfam" id="NF003623">
    <property type="entry name" value="PRK05265.1-1"/>
    <property type="match status" value="1"/>
</dbReference>
<dbReference type="NCBIfam" id="NF003624">
    <property type="entry name" value="PRK05265.1-2"/>
    <property type="match status" value="1"/>
</dbReference>
<dbReference type="NCBIfam" id="NF003625">
    <property type="entry name" value="PRK05265.1-3"/>
    <property type="match status" value="1"/>
</dbReference>
<dbReference type="NCBIfam" id="NF003626">
    <property type="entry name" value="PRK05265.1-4"/>
    <property type="match status" value="1"/>
</dbReference>
<dbReference type="NCBIfam" id="NF003627">
    <property type="entry name" value="PRK05265.1-5"/>
    <property type="match status" value="1"/>
</dbReference>
<dbReference type="PANTHER" id="PTHR30456">
    <property type="entry name" value="PYRIDOXINE 5'-PHOSPHATE SYNTHASE"/>
    <property type="match status" value="1"/>
</dbReference>
<dbReference type="PANTHER" id="PTHR30456:SF0">
    <property type="entry name" value="PYRIDOXINE 5'-PHOSPHATE SYNTHASE"/>
    <property type="match status" value="1"/>
</dbReference>
<dbReference type="Pfam" id="PF03740">
    <property type="entry name" value="PdxJ"/>
    <property type="match status" value="1"/>
</dbReference>
<dbReference type="SUPFAM" id="SSF63892">
    <property type="entry name" value="Pyridoxine 5'-phosphate synthase"/>
    <property type="match status" value="1"/>
</dbReference>
<gene>
    <name evidence="2" type="primary">pdxJ</name>
    <name type="ordered locus">STM2578</name>
</gene>
<name>PDXJ_SALTY</name>
<sequence length="243" mass="26343">MAELLLGVNIDHIATLRNARGTDYPDPVQAAFIAEQAGADGITVHLREDRRHITDRDVRILRQTLHTRMNLEMAVTEEMLAIAVETRPHFCCLVPEKRQEVTTEGGLDVAGQRDKMRDACARLAAAGIQVSLFIDADETQINAAAEVGAPFIEIHTGCYANAETDAEQAKELARIASAATLAARLGLKVNAGHGLTYHNVKAIAALPEMHELNIGHAIIGRAVMTGLKEAVAEMKRLMLEARG</sequence>
<reference key="1">
    <citation type="journal article" date="2001" name="Nature">
        <title>Complete genome sequence of Salmonella enterica serovar Typhimurium LT2.</title>
        <authorList>
            <person name="McClelland M."/>
            <person name="Sanderson K.E."/>
            <person name="Spieth J."/>
            <person name="Clifton S.W."/>
            <person name="Latreille P."/>
            <person name="Courtney L."/>
            <person name="Porwollik S."/>
            <person name="Ali J."/>
            <person name="Dante M."/>
            <person name="Du F."/>
            <person name="Hou S."/>
            <person name="Layman D."/>
            <person name="Leonard S."/>
            <person name="Nguyen C."/>
            <person name="Scott K."/>
            <person name="Holmes A."/>
            <person name="Grewal N."/>
            <person name="Mulvaney E."/>
            <person name="Ryan E."/>
            <person name="Sun H."/>
            <person name="Florea L."/>
            <person name="Miller W."/>
            <person name="Stoneking T."/>
            <person name="Nhan M."/>
            <person name="Waterston R."/>
            <person name="Wilson R.K."/>
        </authorList>
    </citation>
    <scope>NUCLEOTIDE SEQUENCE [LARGE SCALE GENOMIC DNA]</scope>
    <source>
        <strain>LT2 / SGSC1412 / ATCC 700720</strain>
    </source>
</reference>
<protein>
    <recommendedName>
        <fullName evidence="2">Pyridoxine 5'-phosphate synthase</fullName>
        <shortName evidence="2">PNP synthase</shortName>
        <ecNumber evidence="2">2.6.99.2</ecNumber>
    </recommendedName>
</protein>
<evidence type="ECO:0000250" key="1"/>
<evidence type="ECO:0000255" key="2">
    <source>
        <dbReference type="HAMAP-Rule" id="MF_00279"/>
    </source>
</evidence>